<comment type="function">
    <text evidence="1">Dephosphorylates several organic phosphate monoesters. Also has a phosphotransferase activity catalyzing the transfer of low-energy phosphate groups from organic phosphate monoesters to free hydroxyl groups of various organic compounds (By similarity).</text>
</comment>
<comment type="catalytic activity">
    <reaction evidence="1">
        <text>a phosphate monoester + H2O = an alcohol + phosphate</text>
        <dbReference type="Rhea" id="RHEA:15017"/>
        <dbReference type="ChEBI" id="CHEBI:15377"/>
        <dbReference type="ChEBI" id="CHEBI:30879"/>
        <dbReference type="ChEBI" id="CHEBI:43474"/>
        <dbReference type="ChEBI" id="CHEBI:67140"/>
        <dbReference type="EC" id="3.1.3.2"/>
    </reaction>
</comment>
<comment type="cofactor">
    <cofactor evidence="1">
        <name>Mg(2+)</name>
        <dbReference type="ChEBI" id="CHEBI:18420"/>
    </cofactor>
    <text evidence="1">Binds 1 Mg(2+) ion per subunit.</text>
</comment>
<comment type="subunit">
    <text evidence="1">Homotetramer.</text>
</comment>
<comment type="subcellular location">
    <subcellularLocation>
        <location evidence="1">Periplasm</location>
    </subcellularLocation>
</comment>
<comment type="similarity">
    <text evidence="1">Belongs to the class B bacterial acid phosphatase family.</text>
</comment>
<feature type="signal peptide" evidence="2">
    <location>
        <begin position="1"/>
        <end position="22"/>
    </location>
</feature>
<feature type="chain" id="PRO_0000415226" description="Class B acid phosphatase" evidence="2">
    <location>
        <begin position="23"/>
        <end position="235"/>
    </location>
</feature>
<feature type="active site" description="Nucleophile" evidence="1">
    <location>
        <position position="67"/>
    </location>
</feature>
<feature type="active site" description="Proton donor" evidence="1">
    <location>
        <position position="69"/>
    </location>
</feature>
<feature type="binding site" evidence="1">
    <location>
        <position position="67"/>
    </location>
    <ligand>
        <name>Mg(2+)</name>
        <dbReference type="ChEBI" id="CHEBI:18420"/>
    </ligand>
</feature>
<feature type="binding site" evidence="1">
    <location>
        <position position="69"/>
    </location>
    <ligand>
        <name>Mg(2+)</name>
        <dbReference type="ChEBI" id="CHEBI:18420"/>
    </ligand>
</feature>
<feature type="binding site" evidence="1">
    <location>
        <begin position="135"/>
        <end position="136"/>
    </location>
    <ligand>
        <name>substrate</name>
    </ligand>
</feature>
<feature type="binding site" evidence="1">
    <location>
        <position position="175"/>
    </location>
    <ligand>
        <name>substrate</name>
    </ligand>
</feature>
<feature type="binding site" evidence="1">
    <location>
        <position position="190"/>
    </location>
    <ligand>
        <name>Mg(2+)</name>
        <dbReference type="ChEBI" id="CHEBI:18420"/>
    </ligand>
</feature>
<protein>
    <recommendedName>
        <fullName evidence="1 3">Class B acid phosphatase</fullName>
        <shortName evidence="1">CBAP</shortName>
        <ecNumber evidence="1">3.1.3.2</ecNumber>
    </recommendedName>
</protein>
<sequence>MKNLLKLSAIAILAASAVSTFASNKEPYTEQGTNAREMTEQKPIHWISVEQLKKELEGKAPINVSFDIDDTVLFSSPCFYHGQEKYSPGKNDYLKNQDFWNEVNAGCDQYSIPKQIAVDLINMHQARGDQIYFITGRTAGDKDGVTPVLQKAFNIKDMHPVEFMGGRKLPTKYNKTPGIIEHKVSIHYGDSDDDILAAKEAGIRGIRLMRAANSTYQPMPTLGGYGEEVLINSNY</sequence>
<proteinExistence type="inferred from homology"/>
<gene>
    <name evidence="1" type="primary">aphA</name>
    <name type="ordered locus">PARA_07400</name>
</gene>
<organism>
    <name type="scientific">Haemophilus parainfluenzae (strain T3T1)</name>
    <dbReference type="NCBI Taxonomy" id="862965"/>
    <lineage>
        <taxon>Bacteria</taxon>
        <taxon>Pseudomonadati</taxon>
        <taxon>Pseudomonadota</taxon>
        <taxon>Gammaproteobacteria</taxon>
        <taxon>Pasteurellales</taxon>
        <taxon>Pasteurellaceae</taxon>
        <taxon>Haemophilus</taxon>
    </lineage>
</organism>
<accession>E1W3A7</accession>
<dbReference type="EC" id="3.1.3.2" evidence="1"/>
<dbReference type="EMBL" id="FQ312002">
    <property type="protein sequence ID" value="CBW14847.1"/>
    <property type="molecule type" value="Genomic_DNA"/>
</dbReference>
<dbReference type="RefSeq" id="WP_014064597.1">
    <property type="nucleotide sequence ID" value="NC_015964.1"/>
</dbReference>
<dbReference type="SMR" id="E1W3A7"/>
<dbReference type="KEGG" id="hpr:PARA_07400"/>
<dbReference type="PATRIC" id="fig|862965.3.peg.738"/>
<dbReference type="eggNOG" id="COG3700">
    <property type="taxonomic scope" value="Bacteria"/>
</dbReference>
<dbReference type="HOGENOM" id="CLU_081496_0_0_6"/>
<dbReference type="Proteomes" id="UP000007052">
    <property type="component" value="Chromosome"/>
</dbReference>
<dbReference type="GO" id="GO:0030288">
    <property type="term" value="C:outer membrane-bounded periplasmic space"/>
    <property type="evidence" value="ECO:0007669"/>
    <property type="project" value="InterPro"/>
</dbReference>
<dbReference type="GO" id="GO:0003993">
    <property type="term" value="F:acid phosphatase activity"/>
    <property type="evidence" value="ECO:0007669"/>
    <property type="project" value="UniProtKB-EC"/>
</dbReference>
<dbReference type="GO" id="GO:0046872">
    <property type="term" value="F:metal ion binding"/>
    <property type="evidence" value="ECO:0007669"/>
    <property type="project" value="UniProtKB-KW"/>
</dbReference>
<dbReference type="CDD" id="cd07499">
    <property type="entry name" value="HAD_CBAP"/>
    <property type="match status" value="1"/>
</dbReference>
<dbReference type="Gene3D" id="3.40.50.1000">
    <property type="entry name" value="HAD superfamily/HAD-like"/>
    <property type="match status" value="1"/>
</dbReference>
<dbReference type="InterPro" id="IPR005519">
    <property type="entry name" value="Acid_phosphat_B-like"/>
</dbReference>
<dbReference type="InterPro" id="IPR036412">
    <property type="entry name" value="HAD-like_sf"/>
</dbReference>
<dbReference type="InterPro" id="IPR010025">
    <property type="entry name" value="HAD-SF_ppase_IIIB_AphA"/>
</dbReference>
<dbReference type="InterPro" id="IPR023214">
    <property type="entry name" value="HAD_sf"/>
</dbReference>
<dbReference type="NCBIfam" id="TIGR01672">
    <property type="entry name" value="AphA"/>
    <property type="match status" value="1"/>
</dbReference>
<dbReference type="Pfam" id="PF03767">
    <property type="entry name" value="Acid_phosphat_B"/>
    <property type="match status" value="1"/>
</dbReference>
<dbReference type="PIRSF" id="PIRSF017818">
    <property type="entry name" value="Acid_Ptase_B"/>
    <property type="match status" value="1"/>
</dbReference>
<dbReference type="SFLD" id="SFLDG01127">
    <property type="entry name" value="C1.3:_Acid_Phosphatase_Like"/>
    <property type="match status" value="1"/>
</dbReference>
<dbReference type="SFLD" id="SFLDS00003">
    <property type="entry name" value="Haloacid_Dehalogenase"/>
    <property type="match status" value="1"/>
</dbReference>
<dbReference type="SUPFAM" id="SSF56784">
    <property type="entry name" value="HAD-like"/>
    <property type="match status" value="1"/>
</dbReference>
<reference evidence="3" key="1">
    <citation type="submission" date="2010-07" db="EMBL/GenBank/DDBJ databases">
        <title>The genome sequence of Haemophilus parainfluenzae T3T1.</title>
        <authorList>
            <person name="Crook D."/>
            <person name="Hood D."/>
            <person name="Moxon R."/>
            <person name="Parkhill J."/>
            <person name="Aslett M."/>
            <person name="Bentley S.D."/>
        </authorList>
    </citation>
    <scope>NUCLEOTIDE SEQUENCE [LARGE SCALE GENOMIC DNA]</scope>
    <source>
        <strain>T3T1</strain>
    </source>
</reference>
<keyword id="KW-0378">Hydrolase</keyword>
<keyword id="KW-0460">Magnesium</keyword>
<keyword id="KW-0479">Metal-binding</keyword>
<keyword id="KW-0574">Periplasm</keyword>
<keyword id="KW-0732">Signal</keyword>
<evidence type="ECO:0000250" key="1">
    <source>
        <dbReference type="UniProtKB" id="P0AE22"/>
    </source>
</evidence>
<evidence type="ECO:0000255" key="2"/>
<evidence type="ECO:0000312" key="3">
    <source>
        <dbReference type="EMBL" id="CBW14847.1"/>
    </source>
</evidence>
<name>APHA_HAEP3</name>